<name>NUOA_BURMA</name>
<organism>
    <name type="scientific">Burkholderia mallei (strain ATCC 23344)</name>
    <dbReference type="NCBI Taxonomy" id="243160"/>
    <lineage>
        <taxon>Bacteria</taxon>
        <taxon>Pseudomonadati</taxon>
        <taxon>Pseudomonadota</taxon>
        <taxon>Betaproteobacteria</taxon>
        <taxon>Burkholderiales</taxon>
        <taxon>Burkholderiaceae</taxon>
        <taxon>Burkholderia</taxon>
        <taxon>pseudomallei group</taxon>
    </lineage>
</organism>
<keyword id="KW-0997">Cell inner membrane</keyword>
<keyword id="KW-1003">Cell membrane</keyword>
<keyword id="KW-0472">Membrane</keyword>
<keyword id="KW-0520">NAD</keyword>
<keyword id="KW-0874">Quinone</keyword>
<keyword id="KW-1185">Reference proteome</keyword>
<keyword id="KW-1278">Translocase</keyword>
<keyword id="KW-0812">Transmembrane</keyword>
<keyword id="KW-1133">Transmembrane helix</keyword>
<keyword id="KW-0813">Transport</keyword>
<keyword id="KW-0830">Ubiquinone</keyword>
<proteinExistence type="inferred from homology"/>
<feature type="chain" id="PRO_0000362639" description="NADH-quinone oxidoreductase subunit A">
    <location>
        <begin position="1"/>
        <end position="119"/>
    </location>
</feature>
<feature type="transmembrane region" description="Helical" evidence="1">
    <location>
        <begin position="7"/>
        <end position="27"/>
    </location>
</feature>
<feature type="transmembrane region" description="Helical" evidence="1">
    <location>
        <begin position="63"/>
        <end position="83"/>
    </location>
</feature>
<feature type="transmembrane region" description="Helical" evidence="1">
    <location>
        <begin position="88"/>
        <end position="108"/>
    </location>
</feature>
<protein>
    <recommendedName>
        <fullName evidence="1">NADH-quinone oxidoreductase subunit A</fullName>
        <ecNumber evidence="1">7.1.1.-</ecNumber>
    </recommendedName>
    <alternativeName>
        <fullName evidence="1">NADH dehydrogenase I subunit A</fullName>
    </alternativeName>
    <alternativeName>
        <fullName evidence="1">NDH-1 subunit A</fullName>
    </alternativeName>
    <alternativeName>
        <fullName evidence="1">NUO1</fullName>
    </alternativeName>
</protein>
<sequence length="119" mass="13513">MNLAAYYPVLLFLLVGTGLGIALVSIGKILGPNKPDSEKNAPYECGFEAFEDARMKFDVRYYLVAILFIIFDLETAFLFPWGVALREIGWPGFIAMMIFLLEFLLGFAYIWKKGGLDWE</sequence>
<gene>
    <name evidence="1" type="primary">nuoA</name>
    <name type="ordered locus">BMA1829</name>
</gene>
<comment type="function">
    <text evidence="1">NDH-1 shuttles electrons from NADH, via FMN and iron-sulfur (Fe-S) centers, to quinones in the respiratory chain. The immediate electron acceptor for the enzyme in this species is believed to be ubiquinone. Couples the redox reaction to proton translocation (for every two electrons transferred, four hydrogen ions are translocated across the cytoplasmic membrane), and thus conserves the redox energy in a proton gradient.</text>
</comment>
<comment type="catalytic activity">
    <reaction evidence="1">
        <text>a quinone + NADH + 5 H(+)(in) = a quinol + NAD(+) + 4 H(+)(out)</text>
        <dbReference type="Rhea" id="RHEA:57888"/>
        <dbReference type="ChEBI" id="CHEBI:15378"/>
        <dbReference type="ChEBI" id="CHEBI:24646"/>
        <dbReference type="ChEBI" id="CHEBI:57540"/>
        <dbReference type="ChEBI" id="CHEBI:57945"/>
        <dbReference type="ChEBI" id="CHEBI:132124"/>
    </reaction>
</comment>
<comment type="subunit">
    <text evidence="1">NDH-1 is composed of 14 different subunits. Subunits NuoA, H, J, K, L, M, N constitute the membrane sector of the complex.</text>
</comment>
<comment type="subcellular location">
    <subcellularLocation>
        <location evidence="1">Cell inner membrane</location>
        <topology evidence="1">Multi-pass membrane protein</topology>
    </subcellularLocation>
</comment>
<comment type="similarity">
    <text evidence="1">Belongs to the complex I subunit 3 family.</text>
</comment>
<dbReference type="EC" id="7.1.1.-" evidence="1"/>
<dbReference type="EMBL" id="CP000010">
    <property type="protein sequence ID" value="AAU49841.1"/>
    <property type="molecule type" value="Genomic_DNA"/>
</dbReference>
<dbReference type="RefSeq" id="WP_004186624.1">
    <property type="nucleotide sequence ID" value="NC_006348.1"/>
</dbReference>
<dbReference type="RefSeq" id="YP_103434.1">
    <property type="nucleotide sequence ID" value="NC_006348.1"/>
</dbReference>
<dbReference type="SMR" id="Q62IN5"/>
<dbReference type="KEGG" id="bma:BMA1829"/>
<dbReference type="PATRIC" id="fig|243160.12.peg.1867"/>
<dbReference type="eggNOG" id="COG0838">
    <property type="taxonomic scope" value="Bacteria"/>
</dbReference>
<dbReference type="HOGENOM" id="CLU_119549_3_1_4"/>
<dbReference type="Proteomes" id="UP000006693">
    <property type="component" value="Chromosome 1"/>
</dbReference>
<dbReference type="GO" id="GO:0030964">
    <property type="term" value="C:NADH dehydrogenase complex"/>
    <property type="evidence" value="ECO:0007669"/>
    <property type="project" value="TreeGrafter"/>
</dbReference>
<dbReference type="GO" id="GO:0005886">
    <property type="term" value="C:plasma membrane"/>
    <property type="evidence" value="ECO:0007669"/>
    <property type="project" value="UniProtKB-SubCell"/>
</dbReference>
<dbReference type="GO" id="GO:0008137">
    <property type="term" value="F:NADH dehydrogenase (ubiquinone) activity"/>
    <property type="evidence" value="ECO:0007669"/>
    <property type="project" value="InterPro"/>
</dbReference>
<dbReference type="GO" id="GO:0050136">
    <property type="term" value="F:NADH:ubiquinone reductase (non-electrogenic) activity"/>
    <property type="evidence" value="ECO:0007669"/>
    <property type="project" value="UniProtKB-UniRule"/>
</dbReference>
<dbReference type="GO" id="GO:0048038">
    <property type="term" value="F:quinone binding"/>
    <property type="evidence" value="ECO:0007669"/>
    <property type="project" value="UniProtKB-KW"/>
</dbReference>
<dbReference type="FunFam" id="1.20.58.1610:FF:000004">
    <property type="entry name" value="NADH-quinone oxidoreductase subunit A"/>
    <property type="match status" value="1"/>
</dbReference>
<dbReference type="Gene3D" id="1.20.58.1610">
    <property type="entry name" value="NADH:ubiquinone/plastoquinone oxidoreductase, chain 3"/>
    <property type="match status" value="1"/>
</dbReference>
<dbReference type="HAMAP" id="MF_01394">
    <property type="entry name" value="NDH1_NuoA"/>
    <property type="match status" value="1"/>
</dbReference>
<dbReference type="InterPro" id="IPR023043">
    <property type="entry name" value="NAD(P)H_OxRDtase_bac/plastid"/>
</dbReference>
<dbReference type="InterPro" id="IPR000440">
    <property type="entry name" value="NADH_UbQ/plastoQ_OxRdtase_su3"/>
</dbReference>
<dbReference type="InterPro" id="IPR038430">
    <property type="entry name" value="NDAH_ubi_oxred_su3_sf"/>
</dbReference>
<dbReference type="PANTHER" id="PTHR11058">
    <property type="entry name" value="NADH-UBIQUINONE OXIDOREDUCTASE CHAIN 3"/>
    <property type="match status" value="1"/>
</dbReference>
<dbReference type="PANTHER" id="PTHR11058:SF9">
    <property type="entry name" value="NADH-UBIQUINONE OXIDOREDUCTASE CHAIN 3"/>
    <property type="match status" value="1"/>
</dbReference>
<dbReference type="Pfam" id="PF00507">
    <property type="entry name" value="Oxidored_q4"/>
    <property type="match status" value="1"/>
</dbReference>
<reference key="1">
    <citation type="journal article" date="2004" name="Proc. Natl. Acad. Sci. U.S.A.">
        <title>Structural flexibility in the Burkholderia mallei genome.</title>
        <authorList>
            <person name="Nierman W.C."/>
            <person name="DeShazer D."/>
            <person name="Kim H.S."/>
            <person name="Tettelin H."/>
            <person name="Nelson K.E."/>
            <person name="Feldblyum T.V."/>
            <person name="Ulrich R.L."/>
            <person name="Ronning C.M."/>
            <person name="Brinkac L.M."/>
            <person name="Daugherty S.C."/>
            <person name="Davidsen T.D."/>
            <person name="DeBoy R.T."/>
            <person name="Dimitrov G."/>
            <person name="Dodson R.J."/>
            <person name="Durkin A.S."/>
            <person name="Gwinn M.L."/>
            <person name="Haft D.H."/>
            <person name="Khouri H.M."/>
            <person name="Kolonay J.F."/>
            <person name="Madupu R."/>
            <person name="Mohammoud Y."/>
            <person name="Nelson W.C."/>
            <person name="Radune D."/>
            <person name="Romero C.M."/>
            <person name="Sarria S."/>
            <person name="Selengut J."/>
            <person name="Shamblin C."/>
            <person name="Sullivan S.A."/>
            <person name="White O."/>
            <person name="Yu Y."/>
            <person name="Zafar N."/>
            <person name="Zhou L."/>
            <person name="Fraser C.M."/>
        </authorList>
    </citation>
    <scope>NUCLEOTIDE SEQUENCE [LARGE SCALE GENOMIC DNA]</scope>
    <source>
        <strain>ATCC 23344</strain>
    </source>
</reference>
<evidence type="ECO:0000255" key="1">
    <source>
        <dbReference type="HAMAP-Rule" id="MF_01394"/>
    </source>
</evidence>
<accession>Q62IN5</accession>